<feature type="transit peptide" description="Chloroplast" evidence="2">
    <location>
        <begin position="1"/>
        <end position="25"/>
    </location>
</feature>
<feature type="chain" id="PRO_0000426710" description="Lycopene beta cyclase, chloroplastic">
    <location>
        <begin position="26"/>
        <end position="472"/>
    </location>
</feature>
<feature type="region of interest" description="Disordered" evidence="3">
    <location>
        <begin position="1"/>
        <end position="27"/>
    </location>
</feature>
<feature type="binding site" evidence="2">
    <location>
        <begin position="62"/>
        <end position="90"/>
    </location>
    <ligand>
        <name>NAD(+)</name>
        <dbReference type="ChEBI" id="CHEBI:57540"/>
    </ligand>
</feature>
<sequence>MDALLTSPFIPLKKPSHNRKSNTTTASSSSSSFLQLIPQTKKETLDFDLPRYNTLISPTLDLAVVGGGPAGLAVAKRVSDAGLSVCSIDPYPNLVWPNNYGVWVDEFAAMDLLDCIDASWNSASVFIDDNNRKLLSRPYARVDRRRLKSRLLNAYLSNGVRFHQSKVLNVVHEEAKSVLLCSDGTRIPAAVVLDATGFSRCLVQYQQPYNPGYQVAYGILAEVEEHPFELDQMVFMDWRDSHLGFRPELKKRNDGLPTFLYAMPFSSDLIFLEETSLVARPGLLIEDIQERMIERLRHLGIRIKRIEEDERCVIPMGGPLPVLPQRVLGIGGTAGMVHPSTGYMVARTLAAAPIVADAIVGYIGGSGAEVSARVWKDLWPIERRRQREFFCFGMDVLLKLDLEGTRRFFDAFFGLEERYWHGFLSSRLFLPELVGFGFSLFGRASAGCRLEIMAKGTVPLIKMIRNLLKDLE</sequence>
<proteinExistence type="evidence at transcript level"/>
<comment type="function">
    <text evidence="1">Catalyzes the double cyclization reaction which converts lycopene to beta-carotene and neurosporene to beta-zeacarotene.</text>
</comment>
<comment type="catalytic activity">
    <reaction>
        <text>a carotenoid psi-end group = a carotenoid beta-end derivative</text>
        <dbReference type="Rhea" id="RHEA:55620"/>
        <dbReference type="ChEBI" id="CHEBI:139114"/>
        <dbReference type="ChEBI" id="CHEBI:139120"/>
        <dbReference type="EC" id="5.5.1.19"/>
    </reaction>
</comment>
<comment type="pathway">
    <text>Carotenoid biosynthesis; beta-carotene biosynthesis.</text>
</comment>
<comment type="pathway">
    <text>Carotenoid biosynthesis; beta-zeacarotene biosynthesis.</text>
</comment>
<comment type="subcellular location">
    <subcellularLocation>
        <location evidence="1">Plastid</location>
        <location evidence="1">Chloroplast</location>
    </subcellularLocation>
</comment>
<comment type="tissue specificity">
    <text evidence="4">Expressed in flower buds and lips. Detected in roots and leaves.</text>
</comment>
<comment type="developmental stage">
    <text evidence="4">Expressed during floral development.</text>
</comment>
<comment type="similarity">
    <text evidence="5">Belongs to the lycopene cyclase family.</text>
</comment>
<name>LCYB_ONCHC</name>
<evidence type="ECO:0000250" key="1"/>
<evidence type="ECO:0000255" key="2"/>
<evidence type="ECO:0000256" key="3">
    <source>
        <dbReference type="SAM" id="MobiDB-lite"/>
    </source>
</evidence>
<evidence type="ECO:0000269" key="4">
    <source>
    </source>
</evidence>
<evidence type="ECO:0000305" key="5"/>
<accession>D9IL23</accession>
<organism>
    <name type="scientific">Oncidium hybrid cultivar</name>
    <name type="common">Orchid</name>
    <dbReference type="NCBI Taxonomy" id="141207"/>
    <lineage>
        <taxon>Eukaryota</taxon>
        <taxon>Viridiplantae</taxon>
        <taxon>Streptophyta</taxon>
        <taxon>Embryophyta</taxon>
        <taxon>Tracheophyta</taxon>
        <taxon>Spermatophyta</taxon>
        <taxon>Magnoliopsida</taxon>
        <taxon>Liliopsida</taxon>
        <taxon>Asparagales</taxon>
        <taxon>Orchidaceae</taxon>
        <taxon>Epidendroideae</taxon>
        <taxon>Cymbidieae</taxon>
        <taxon>Oncidiinae</taxon>
        <taxon>Oncidium</taxon>
    </lineage>
</organism>
<gene>
    <name type="primary">LCY-B</name>
</gene>
<keyword id="KW-0125">Carotenoid biosynthesis</keyword>
<keyword id="KW-0150">Chloroplast</keyword>
<keyword id="KW-0413">Isomerase</keyword>
<keyword id="KW-0520">NAD</keyword>
<keyword id="KW-0934">Plastid</keyword>
<keyword id="KW-0809">Transit peptide</keyword>
<protein>
    <recommendedName>
        <fullName>Lycopene beta cyclase, chloroplastic</fullName>
        <shortName>OgLCY-B</shortName>
        <ecNumber>5.5.1.19</ecNumber>
    </recommendedName>
</protein>
<dbReference type="EC" id="5.5.1.19"/>
<dbReference type="EMBL" id="HM146076">
    <property type="protein sequence ID" value="ADJ67814.1"/>
    <property type="molecule type" value="mRNA"/>
</dbReference>
<dbReference type="SMR" id="D9IL23"/>
<dbReference type="UniPathway" id="UPA00802"/>
<dbReference type="UniPathway" id="UPA00805"/>
<dbReference type="GO" id="GO:0009507">
    <property type="term" value="C:chloroplast"/>
    <property type="evidence" value="ECO:0007669"/>
    <property type="project" value="UniProtKB-SubCell"/>
</dbReference>
<dbReference type="GO" id="GO:0016860">
    <property type="term" value="F:intramolecular oxidoreductase activity"/>
    <property type="evidence" value="ECO:0007669"/>
    <property type="project" value="UniProtKB-ARBA"/>
</dbReference>
<dbReference type="GO" id="GO:0016705">
    <property type="term" value="F:oxidoreductase activity, acting on paired donors, with incorporation or reduction of molecular oxygen"/>
    <property type="evidence" value="ECO:0007669"/>
    <property type="project" value="InterPro"/>
</dbReference>
<dbReference type="GO" id="GO:0016117">
    <property type="term" value="P:carotenoid biosynthetic process"/>
    <property type="evidence" value="ECO:0007669"/>
    <property type="project" value="UniProtKB-KW"/>
</dbReference>
<dbReference type="FunFam" id="3.50.50.60:FF:000101">
    <property type="entry name" value="lycopene epsilon cyclase, chloroplastic"/>
    <property type="match status" value="1"/>
</dbReference>
<dbReference type="Gene3D" id="3.50.50.60">
    <property type="entry name" value="FAD/NAD(P)-binding domain"/>
    <property type="match status" value="1"/>
</dbReference>
<dbReference type="InterPro" id="IPR036188">
    <property type="entry name" value="FAD/NAD-bd_sf"/>
</dbReference>
<dbReference type="InterPro" id="IPR010108">
    <property type="entry name" value="Lycopene_cyclase_b/e"/>
</dbReference>
<dbReference type="NCBIfam" id="TIGR01790">
    <property type="entry name" value="carotene-cycl"/>
    <property type="match status" value="1"/>
</dbReference>
<dbReference type="PANTHER" id="PTHR39757">
    <property type="match status" value="1"/>
</dbReference>
<dbReference type="PANTHER" id="PTHR39757:SF5">
    <property type="entry name" value="OS02G0190600 PROTEIN"/>
    <property type="match status" value="1"/>
</dbReference>
<dbReference type="Pfam" id="PF05834">
    <property type="entry name" value="Lycopene_cycl"/>
    <property type="match status" value="1"/>
</dbReference>
<dbReference type="SUPFAM" id="SSF51905">
    <property type="entry name" value="FAD/NAD(P)-binding domain"/>
    <property type="match status" value="1"/>
</dbReference>
<reference key="1">
    <citation type="journal article" date="2010" name="Planta">
        <title>Differential expression of carotenoid-related genes determines diversified carotenoid coloration in floral tissues of Oncidium cultivars.</title>
        <authorList>
            <person name="Chiou C.Y."/>
            <person name="Pan H.A."/>
            <person name="Chuang Y.N."/>
            <person name="Yeh K.W."/>
        </authorList>
    </citation>
    <scope>NUCLEOTIDE SEQUENCE [MRNA]</scope>
    <scope>DEVELOPMENTAL STAGE</scope>
    <scope>TISSUE SPECIFICITY</scope>
</reference>